<keyword id="KW-0002">3D-structure</keyword>
<keyword id="KW-0021">Allosteric enzyme</keyword>
<keyword id="KW-0378">Hydrolase</keyword>
<keyword id="KW-1185">Reference proteome</keyword>
<keyword id="KW-0719">Serine esterase</keyword>
<evidence type="ECO:0000269" key="1">
    <source>
    </source>
</evidence>
<evidence type="ECO:0000269" key="2">
    <source>
    </source>
</evidence>
<evidence type="ECO:0000269" key="3">
    <source>
    </source>
</evidence>
<evidence type="ECO:0000269" key="4">
    <source>
    </source>
</evidence>
<evidence type="ECO:0000269" key="5">
    <source>
    </source>
</evidence>
<evidence type="ECO:0000305" key="6"/>
<evidence type="ECO:0000305" key="7">
    <source>
    </source>
</evidence>
<evidence type="ECO:0000305" key="8">
    <source>
    </source>
</evidence>
<evidence type="ECO:0000305" key="9">
    <source>
    </source>
</evidence>
<evidence type="ECO:0000312" key="10">
    <source>
        <dbReference type="EMBL" id="CCP42767.1"/>
    </source>
</evidence>
<evidence type="ECO:0007744" key="11">
    <source>
        <dbReference type="PDB" id="3P2M"/>
    </source>
</evidence>
<evidence type="ECO:0007744" key="12">
    <source>
        <dbReference type="PDB" id="6WYM"/>
    </source>
</evidence>
<evidence type="ECO:0007744" key="13">
    <source>
        <dbReference type="PDB" id="6WYN"/>
    </source>
</evidence>
<evidence type="ECO:0007744" key="14">
    <source>
    </source>
</evidence>
<evidence type="ECO:0007829" key="15">
    <source>
        <dbReference type="PDB" id="6WYM"/>
    </source>
</evidence>
<evidence type="ECO:0007829" key="16">
    <source>
        <dbReference type="PDB" id="6WYN"/>
    </source>
</evidence>
<reference key="1">
    <citation type="journal article" date="1998" name="Nature">
        <title>Deciphering the biology of Mycobacterium tuberculosis from the complete genome sequence.</title>
        <authorList>
            <person name="Cole S.T."/>
            <person name="Brosch R."/>
            <person name="Parkhill J."/>
            <person name="Garnier T."/>
            <person name="Churcher C.M."/>
            <person name="Harris D.E."/>
            <person name="Gordon S.V."/>
            <person name="Eiglmeier K."/>
            <person name="Gas S."/>
            <person name="Barry C.E. III"/>
            <person name="Tekaia F."/>
            <person name="Badcock K."/>
            <person name="Basham D."/>
            <person name="Brown D."/>
            <person name="Chillingworth T."/>
            <person name="Connor R."/>
            <person name="Davies R.M."/>
            <person name="Devlin K."/>
            <person name="Feltwell T."/>
            <person name="Gentles S."/>
            <person name="Hamlin N."/>
            <person name="Holroyd S."/>
            <person name="Hornsby T."/>
            <person name="Jagels K."/>
            <person name="Krogh A."/>
            <person name="McLean J."/>
            <person name="Moule S."/>
            <person name="Murphy L.D."/>
            <person name="Oliver S."/>
            <person name="Osborne J."/>
            <person name="Quail M.A."/>
            <person name="Rajandream M.A."/>
            <person name="Rogers J."/>
            <person name="Rutter S."/>
            <person name="Seeger K."/>
            <person name="Skelton S."/>
            <person name="Squares S."/>
            <person name="Squares R."/>
            <person name="Sulston J.E."/>
            <person name="Taylor K."/>
            <person name="Whitehead S."/>
            <person name="Barrell B.G."/>
        </authorList>
    </citation>
    <scope>NUCLEOTIDE SEQUENCE [LARGE SCALE GENOMIC DNA]</scope>
    <source>
        <strain>ATCC 25618 / H37Rv</strain>
    </source>
</reference>
<reference key="2">
    <citation type="journal article" date="2010" name="Acta Crystallogr. F">
        <title>Crystallization and preliminary X-ray analysis of a novel esterase Rv0045c from Mycobacterium tuberculosis.</title>
        <authorList>
            <person name="Xu L."/>
            <person name="Guo J."/>
            <person name="Zheng X."/>
            <person name="Wen T."/>
            <person name="Sun F."/>
            <person name="Liu S."/>
            <person name="Pang H."/>
        </authorList>
    </citation>
    <scope>CRYSTALLIZATION</scope>
    <scope>SUBUNIT</scope>
</reference>
<reference key="3">
    <citation type="journal article" date="2010" name="PLoS ONE">
        <title>Characterization of a novel esterase Rv0045c from Mycobacterium tuberculosis.</title>
        <authorList>
            <person name="Guo J."/>
            <person name="Zheng X."/>
            <person name="Xu L."/>
            <person name="Liu Z."/>
            <person name="Xu K."/>
            <person name="Li S."/>
            <person name="Wen T."/>
            <person name="Liu S."/>
            <person name="Pang H."/>
        </authorList>
    </citation>
    <scope>FUNCTION</scope>
    <scope>CATALYTIC ACTIVITY</scope>
    <scope>BIOPHYSICOCHEMICAL PROPERTIES</scope>
</reference>
<reference evidence="14" key="4">
    <citation type="journal article" date="2011" name="Mol. Cell. Proteomics">
        <title>Proteogenomic analysis of Mycobacterium tuberculosis by high resolution mass spectrometry.</title>
        <authorList>
            <person name="Kelkar D.S."/>
            <person name="Kumar D."/>
            <person name="Kumar P."/>
            <person name="Balakrishnan L."/>
            <person name="Muthusamy B."/>
            <person name="Yadav A.K."/>
            <person name="Shrivastava P."/>
            <person name="Marimuthu A."/>
            <person name="Anand S."/>
            <person name="Sundaram H."/>
            <person name="Kingsbury R."/>
            <person name="Harsha H.C."/>
            <person name="Nair B."/>
            <person name="Prasad T.S."/>
            <person name="Chauhan D.S."/>
            <person name="Katoch K."/>
            <person name="Katoch V.M."/>
            <person name="Kumar P."/>
            <person name="Chaerkady R."/>
            <person name="Ramachandran S."/>
            <person name="Dash D."/>
            <person name="Pandey A."/>
        </authorList>
    </citation>
    <scope>IDENTIFICATION BY MASS SPECTROMETRY [LARGE SCALE ANALYSIS]</scope>
</reference>
<reference key="5">
    <citation type="journal article" date="2014" name="Biochemistry">
        <title>Distinct substrate selectivity of a metabolic hydrolase from Mycobacterium tuberculosis.</title>
        <authorList>
            <person name="Lukowski J.K."/>
            <person name="Savas C.P."/>
            <person name="Gehring A.M."/>
            <person name="McKary M.G."/>
            <person name="Adkins C.T."/>
            <person name="Lavis L.D."/>
            <person name="Hoops G.C."/>
            <person name="Johnson R.J."/>
        </authorList>
    </citation>
    <scope>FUNCTION</scope>
    <scope>CATALYTIC ACTIVITY</scope>
    <scope>SUBSTRATE SPECIFICITY</scope>
    <scope>ACTIVE SITE</scope>
    <scope>MUTAGENESIS OF SER-122; ASP-146 AND HIS-277</scope>
</reference>
<reference evidence="11" key="6">
    <citation type="journal article" date="2011" name="PLoS ONE">
        <title>Crystal structure of a novel esterase Rv0045c from Mycobacterium tuberculosis.</title>
        <authorList>
            <person name="Zheng X."/>
            <person name="Guo J."/>
            <person name="Xu L."/>
            <person name="Li H."/>
            <person name="Zhang D."/>
            <person name="Zhang K."/>
            <person name="Sun F."/>
            <person name="Wen T."/>
            <person name="Liu S."/>
            <person name="Pang H."/>
        </authorList>
    </citation>
    <scope>X-RAY CRYSTALLOGRAPHY (2.80 ANGSTROMS)</scope>
    <scope>ACTIVE SITE</scope>
    <scope>DOMAIN</scope>
</reference>
<reference evidence="12 13" key="7">
    <citation type="journal article" date="2021" name="Protein Sci.">
        <title>Transition metal cation inhibition of Mycobacterium tuberculosis esterase RV0045C.</title>
        <authorList>
            <person name="Bowles I.E."/>
            <person name="Pool E.H."/>
            <person name="Lancaster B.S."/>
            <person name="Lawson E.K."/>
            <person name="Savas C.P."/>
            <person name="Kartje Z.J."/>
            <person name="Severinac L."/>
            <person name="Cho D.H."/>
            <person name="Macbeth M.R."/>
            <person name="Johnson R.J."/>
            <person name="Hoops G.C."/>
        </authorList>
    </citation>
    <scope>X-RAY CRYSTALLOGRAPHY (1.81 ANGSTROMS) OF 2-298</scope>
    <scope>ACTIVITY REGULATION</scope>
    <scope>DOMAIN</scope>
    <scope>MUTAGENESIS OF HIS-155; GLU-161; GLN-162; ARG-163; THR-165; HIS-170; GLU-172 AND HIS-191</scope>
</reference>
<sequence length="298" mass="32131">MLSDDELTGLDEFALLAENAEQAGVNGPLPEVERVQAGAISALRWGGSAPRVIFLHGGGQNAHTWDTVIVGLGEPALAVDLPGHGHSAWREDGNYSPQLNSETLAPVLRELAPGAEFVVGMSLGGLTAIRLAAMAPDLVGELVLVDVTPSALQRHAELTAEQRGTVALMHGEREFPSFQAMLDLTIAAAPHRDVKSLRRGVFHNSRRLDNGNWVWRYDAIRTFGDFAGLWDDVDALSAPITLVRGGSSGFVTDQDTAELHRRATHFRGVHIVEKSGHSVQSDQPRALIEIVRGVLDTR</sequence>
<name>EST45_MYCTU</name>
<gene>
    <name evidence="10" type="ordered locus">Rv0045c</name>
</gene>
<proteinExistence type="evidence at protein level"/>
<feature type="chain" id="PRO_0000451571" description="Esterase Rv0045c">
    <location>
        <begin position="1"/>
        <end position="298"/>
    </location>
</feature>
<feature type="active site" description="Nucleophile" evidence="8 9">
    <location>
        <position position="122"/>
    </location>
</feature>
<feature type="active site" evidence="9">
    <location>
        <position position="146"/>
    </location>
</feature>
<feature type="active site" evidence="8 9">
    <location>
        <position position="277"/>
    </location>
</feature>
<feature type="site" description="Involved in substrate selectivity" evidence="4">
    <location>
        <position position="58"/>
    </location>
</feature>
<feature type="site" description="Involved in substrate selectivity" evidence="4">
    <location>
        <position position="155"/>
    </location>
</feature>
<feature type="mutagenesis site" description="550-fold decrease in catalytic activity." evidence="4">
    <original>S</original>
    <variation>A</variation>
    <location>
        <position position="122"/>
    </location>
</feature>
<feature type="mutagenesis site" description="55-fold decrease in catalytic activity." evidence="4">
    <original>D</original>
    <variation>A</variation>
    <location>
        <position position="146"/>
    </location>
</feature>
<feature type="mutagenesis site" description="No change in sensitivity to Zn(2+)." evidence="5">
    <original>H</original>
    <variation>A</variation>
    <location>
        <position position="155"/>
    </location>
</feature>
<feature type="mutagenesis site" description="No change in sensitivity to Zn(2+)." evidence="5">
    <original>E</original>
    <variation>A</variation>
    <location>
        <position position="161"/>
    </location>
</feature>
<feature type="mutagenesis site" description="No change in sensitivity to Zn(2+)." evidence="5">
    <original>Q</original>
    <variation>A</variation>
    <location>
        <position position="162"/>
    </location>
</feature>
<feature type="mutagenesis site" description="No change in sensitivity to Zn(2+)." evidence="5">
    <original>R</original>
    <variation>A</variation>
    <location>
        <position position="163"/>
    </location>
</feature>
<feature type="mutagenesis site" description="No change in sensitivity to Zn(2+)." evidence="5">
    <original>T</original>
    <variation>A</variation>
    <location>
        <position position="165"/>
    </location>
</feature>
<feature type="mutagenesis site" description="Less sensitive to Zn(2+) inhibition." evidence="5">
    <original>H</original>
    <variation>A</variation>
    <location>
        <position position="170"/>
    </location>
</feature>
<feature type="mutagenesis site" description="Less sensitive to Zn(2+) inhibition." evidence="5">
    <original>E</original>
    <variation>A</variation>
    <location>
        <position position="172"/>
    </location>
</feature>
<feature type="mutagenesis site" description="No change in sensitivity to Zn(2+)." evidence="5">
    <original>H</original>
    <variation>A</variation>
    <location>
        <position position="191"/>
    </location>
</feature>
<feature type="mutagenesis site" description="9000-fold decrease in catalytic activity." evidence="4">
    <original>H</original>
    <variation>A</variation>
    <location>
        <position position="277"/>
    </location>
</feature>
<feature type="turn" evidence="16">
    <location>
        <begin position="12"/>
        <end position="15"/>
    </location>
</feature>
<feature type="helix" evidence="16">
    <location>
        <begin position="16"/>
        <end position="22"/>
    </location>
</feature>
<feature type="strand" evidence="16">
    <location>
        <begin position="32"/>
        <end position="37"/>
    </location>
</feature>
<feature type="strand" evidence="16">
    <location>
        <begin position="40"/>
        <end position="48"/>
    </location>
</feature>
<feature type="strand" evidence="16">
    <location>
        <begin position="51"/>
        <end position="55"/>
    </location>
</feature>
<feature type="helix" evidence="16">
    <location>
        <begin position="62"/>
        <end position="65"/>
    </location>
</feature>
<feature type="helix" evidence="16">
    <location>
        <begin position="66"/>
        <end position="72"/>
    </location>
</feature>
<feature type="strand" evidence="16">
    <location>
        <begin position="76"/>
        <end position="79"/>
    </location>
</feature>
<feature type="helix" evidence="16">
    <location>
        <begin position="97"/>
        <end position="111"/>
    </location>
</feature>
<feature type="strand" evidence="16">
    <location>
        <begin position="117"/>
        <end position="121"/>
    </location>
</feature>
<feature type="helix" evidence="16">
    <location>
        <begin position="123"/>
        <end position="134"/>
    </location>
</feature>
<feature type="turn" evidence="16">
    <location>
        <begin position="136"/>
        <end position="138"/>
    </location>
</feature>
<feature type="strand" evidence="16">
    <location>
        <begin position="140"/>
        <end position="146"/>
    </location>
</feature>
<feature type="helix" evidence="16">
    <location>
        <begin position="149"/>
        <end position="167"/>
    </location>
</feature>
<feature type="strand" evidence="15">
    <location>
        <begin position="169"/>
        <end position="172"/>
    </location>
</feature>
<feature type="helix" evidence="16">
    <location>
        <begin position="178"/>
        <end position="188"/>
    </location>
</feature>
<feature type="helix" evidence="16">
    <location>
        <begin position="194"/>
        <end position="204"/>
    </location>
</feature>
<feature type="strand" evidence="16">
    <location>
        <begin position="205"/>
        <end position="207"/>
    </location>
</feature>
<feature type="strand" evidence="16">
    <location>
        <begin position="213"/>
        <end position="217"/>
    </location>
</feature>
<feature type="helix" evidence="16">
    <location>
        <begin position="227"/>
        <end position="235"/>
    </location>
</feature>
<feature type="strand" evidence="16">
    <location>
        <begin position="240"/>
        <end position="245"/>
    </location>
</feature>
<feature type="helix" evidence="16">
    <location>
        <begin position="253"/>
        <end position="262"/>
    </location>
</feature>
<feature type="strand" evidence="16">
    <location>
        <begin position="264"/>
        <end position="272"/>
    </location>
</feature>
<feature type="helix" evidence="16">
    <location>
        <begin position="279"/>
        <end position="282"/>
    </location>
</feature>
<feature type="helix" evidence="16">
    <location>
        <begin position="284"/>
        <end position="295"/>
    </location>
</feature>
<protein>
    <recommendedName>
        <fullName evidence="7">Esterase Rv0045c</fullName>
        <ecNumber evidence="1 4">3.1.1.1</ecNumber>
    </recommendedName>
</protein>
<organism>
    <name type="scientific">Mycobacterium tuberculosis (strain ATCC 25618 / H37Rv)</name>
    <dbReference type="NCBI Taxonomy" id="83332"/>
    <lineage>
        <taxon>Bacteria</taxon>
        <taxon>Bacillati</taxon>
        <taxon>Actinomycetota</taxon>
        <taxon>Actinomycetes</taxon>
        <taxon>Mycobacteriales</taxon>
        <taxon>Mycobacteriaceae</taxon>
        <taxon>Mycobacterium</taxon>
        <taxon>Mycobacterium tuberculosis complex</taxon>
    </lineage>
</organism>
<dbReference type="EC" id="3.1.1.1" evidence="1 4"/>
<dbReference type="EMBL" id="AL123456">
    <property type="protein sequence ID" value="CCP42767.1"/>
    <property type="molecule type" value="Genomic_DNA"/>
</dbReference>
<dbReference type="RefSeq" id="NP_214559.1">
    <property type="nucleotide sequence ID" value="NC_000962.3"/>
</dbReference>
<dbReference type="RefSeq" id="WP_003400489.1">
    <property type="nucleotide sequence ID" value="NZ_NVQJ01000005.1"/>
</dbReference>
<dbReference type="PDB" id="3P2M">
    <property type="method" value="X-ray"/>
    <property type="resolution" value="2.80 A"/>
    <property type="chains" value="A=2-298"/>
</dbReference>
<dbReference type="PDB" id="6WYM">
    <property type="method" value="X-ray"/>
    <property type="resolution" value="2.00 A"/>
    <property type="chains" value="A=2-298"/>
</dbReference>
<dbReference type="PDB" id="6WYN">
    <property type="method" value="X-ray"/>
    <property type="resolution" value="1.81 A"/>
    <property type="chains" value="A=2-298"/>
</dbReference>
<dbReference type="PDBsum" id="3P2M"/>
<dbReference type="PDBsum" id="6WYM"/>
<dbReference type="PDBsum" id="6WYN"/>
<dbReference type="SMR" id="I6XU97"/>
<dbReference type="FunCoup" id="I6XU97">
    <property type="interactions" value="182"/>
</dbReference>
<dbReference type="STRING" id="83332.Rv0045c"/>
<dbReference type="SwissLipids" id="SLP:000001363"/>
<dbReference type="ESTHER" id="myctu-RV0045C">
    <property type="family name" value="6_AlphaBeta_hydrolase"/>
</dbReference>
<dbReference type="PaxDb" id="83332-Rv0045c"/>
<dbReference type="DNASU" id="887029"/>
<dbReference type="GeneID" id="887029"/>
<dbReference type="KEGG" id="mtu:Rv0045c"/>
<dbReference type="KEGG" id="mtv:RVBD_0045c"/>
<dbReference type="PATRIC" id="fig|83332.111.peg.51"/>
<dbReference type="TubercuList" id="Rv0045c"/>
<dbReference type="eggNOG" id="COG0596">
    <property type="taxonomic scope" value="Bacteria"/>
</dbReference>
<dbReference type="eggNOG" id="COG2021">
    <property type="taxonomic scope" value="Bacteria"/>
</dbReference>
<dbReference type="InParanoid" id="I6XU97"/>
<dbReference type="OrthoDB" id="63519at2"/>
<dbReference type="PhylomeDB" id="I6XU97"/>
<dbReference type="Proteomes" id="UP000001584">
    <property type="component" value="Chromosome"/>
</dbReference>
<dbReference type="GO" id="GO:0106435">
    <property type="term" value="F:carboxylesterase activity"/>
    <property type="evidence" value="ECO:0007669"/>
    <property type="project" value="UniProtKB-EC"/>
</dbReference>
<dbReference type="GO" id="GO:0016787">
    <property type="term" value="F:hydrolase activity"/>
    <property type="evidence" value="ECO:0000318"/>
    <property type="project" value="GO_Central"/>
</dbReference>
<dbReference type="FunFam" id="3.40.50.1820:FF:000351">
    <property type="entry name" value="POSSIBLE HYDROLASE"/>
    <property type="match status" value="1"/>
</dbReference>
<dbReference type="Gene3D" id="3.40.50.1820">
    <property type="entry name" value="alpha/beta hydrolase"/>
    <property type="match status" value="1"/>
</dbReference>
<dbReference type="InterPro" id="IPR000073">
    <property type="entry name" value="AB_hydrolase_1"/>
</dbReference>
<dbReference type="InterPro" id="IPR029058">
    <property type="entry name" value="AB_hydrolase_fold"/>
</dbReference>
<dbReference type="InterPro" id="IPR050228">
    <property type="entry name" value="Carboxylesterase_BioH"/>
</dbReference>
<dbReference type="PANTHER" id="PTHR43194">
    <property type="entry name" value="HYDROLASE ALPHA/BETA FOLD FAMILY"/>
    <property type="match status" value="1"/>
</dbReference>
<dbReference type="PANTHER" id="PTHR43194:SF2">
    <property type="entry name" value="PEROXISOMAL MEMBRANE PROTEIN LPX1"/>
    <property type="match status" value="1"/>
</dbReference>
<dbReference type="Pfam" id="PF12697">
    <property type="entry name" value="Abhydrolase_6"/>
    <property type="match status" value="1"/>
</dbReference>
<dbReference type="PRINTS" id="PR00111">
    <property type="entry name" value="ABHYDROLASE"/>
</dbReference>
<dbReference type="SUPFAM" id="SSF53474">
    <property type="entry name" value="alpha/beta-Hydrolases"/>
    <property type="match status" value="1"/>
</dbReference>
<accession>I6XU97</accession>
<comment type="function">
    <text evidence="1 4">Esterase likely involved in ester/lipid metabolism. Shows strong substrate selectivity toward short, straight chain alkyl esters with the highest activity toward four atom chains. The physiological substrate is unknown (PubMed:25354081). Is able to hydrolyze ester bonds within a wide range of p-nitrophenyl derivatives (C2-C14) in vitro (PubMed:20957207).</text>
</comment>
<comment type="catalytic activity">
    <reaction evidence="1 4">
        <text>a carboxylic ester + H2O = an alcohol + a carboxylate + H(+)</text>
        <dbReference type="Rhea" id="RHEA:21164"/>
        <dbReference type="ChEBI" id="CHEBI:15377"/>
        <dbReference type="ChEBI" id="CHEBI:15378"/>
        <dbReference type="ChEBI" id="CHEBI:29067"/>
        <dbReference type="ChEBI" id="CHEBI:30879"/>
        <dbReference type="ChEBI" id="CHEBI:33308"/>
        <dbReference type="EC" id="3.1.1.1"/>
    </reaction>
</comment>
<comment type="catalytic activity">
    <reaction evidence="4">
        <text>a butanoate ester + H2O = an aliphatic alcohol + butanoate + H(+)</text>
        <dbReference type="Rhea" id="RHEA:47348"/>
        <dbReference type="ChEBI" id="CHEBI:2571"/>
        <dbReference type="ChEBI" id="CHEBI:15377"/>
        <dbReference type="ChEBI" id="CHEBI:15378"/>
        <dbReference type="ChEBI" id="CHEBI:17968"/>
        <dbReference type="ChEBI" id="CHEBI:50477"/>
    </reaction>
</comment>
<comment type="catalytic activity">
    <reaction evidence="1">
        <text>an acetyl ester + H2O = an aliphatic alcohol + acetate + H(+)</text>
        <dbReference type="Rhea" id="RHEA:12957"/>
        <dbReference type="ChEBI" id="CHEBI:2571"/>
        <dbReference type="ChEBI" id="CHEBI:15377"/>
        <dbReference type="ChEBI" id="CHEBI:15378"/>
        <dbReference type="ChEBI" id="CHEBI:30089"/>
        <dbReference type="ChEBI" id="CHEBI:47622"/>
    </reaction>
</comment>
<comment type="catalytic activity">
    <reaction evidence="1">
        <text>a hexanoate ester + H2O = an aliphatic alcohol + hexanoate + H(+)</text>
        <dbReference type="Rhea" id="RHEA:47352"/>
        <dbReference type="ChEBI" id="CHEBI:2571"/>
        <dbReference type="ChEBI" id="CHEBI:15377"/>
        <dbReference type="ChEBI" id="CHEBI:15378"/>
        <dbReference type="ChEBI" id="CHEBI:17120"/>
        <dbReference type="ChEBI" id="CHEBI:87656"/>
    </reaction>
</comment>
<comment type="catalytic activity">
    <reaction evidence="1">
        <text>a tetradecanoate ester + H2O = an aliphatic alcohol + tetradecanoate + H(+)</text>
        <dbReference type="Rhea" id="RHEA:47388"/>
        <dbReference type="ChEBI" id="CHEBI:2571"/>
        <dbReference type="ChEBI" id="CHEBI:15377"/>
        <dbReference type="ChEBI" id="CHEBI:15378"/>
        <dbReference type="ChEBI" id="CHEBI:30807"/>
        <dbReference type="ChEBI" id="CHEBI:87691"/>
    </reaction>
</comment>
<comment type="activity regulation">
    <text evidence="5">Hydrolysis of a fluorogenic ester substrate (MOAME) is allosterically inhibited by divalent transition metal cations (Cu(2+), Zn(2+), Ni(2+) and Co(2+)) (PubMed:33914998). Inhibition is largely due to a two order of magnitude drop in kcat, with relatively little change in KM (PubMed:33914998). The thermal stability decreases with increasing concentrations of Ni(2+) (PubMed:33914998).</text>
</comment>
<comment type="biophysicochemical properties">
    <phDependence>
        <text evidence="1">Optimum pH is 8.0 for the hydrolysis of p-nitrophenyl hexanoate.</text>
    </phDependence>
    <temperatureDependence>
        <text evidence="1">Optimum temperature is 39 degrees Celsius for the hydrolysis of p-nitrophenyl hexanoate.</text>
    </temperatureDependence>
</comment>
<comment type="subunit">
    <text evidence="2">Monomer.</text>
</comment>
<comment type="domain">
    <text evidence="3 5">Contains two distinct structural domains: an almost globular alpha/beta fold domain and an inserted cap domain which interacts with the alpha/beta fold domain (PubMed:21637775). A flexible loop plays a functional role in the metal-dependent allosteric regulation of the enzyme (PubMed:33914998).</text>
</comment>
<comment type="similarity">
    <text evidence="6">Belongs to the AB hydrolase superfamily.</text>
</comment>